<sequence>MIPRPQPHSGRWRAGAARRLTSLVAAAFAAATLLLTPALAPPASAGCPDAEVVFARGTGEPPGLGRVGQAFVSSLRQQTNKSIGTYGVNYPANGDFLAAADGANDASDHIQQMASACRATRLVLGGYSQGAAVIDIVTAAPLPGLGFTQPLPPAADDHIAAIALFGNPSGRAGGLMSALTPQFGSKTINLCNNGDPICSDGNRWRAHLGYVPGMTNQAARFVASRI</sequence>
<name>CULP4_MYCTU</name>
<proteinExistence type="evidence at protein level"/>
<protein>
    <recommendedName>
        <fullName evidence="9">Phospholipase Culp4</fullName>
        <ecNumber evidence="5 6">3.1.1.-</ecNumber>
    </recommendedName>
    <alternativeName>
        <fullName evidence="8">Cutinase-like protein 4</fullName>
        <shortName evidence="8">Culp4</shortName>
    </alternativeName>
</protein>
<comment type="function">
    <text evidence="5 6">A2-type phospholipase, which is probably involved in the degradation of macrophage membrane (PubMed:20103719). Hydrolyzes dipalmitoylphosphatidylcholine (PubMed:20103719). Also shows moderate esterase activity and hydrolyzes the p-nitrophenol-linked aliphatic ester pNP-butyrate (C4) (PubMed:19225166, PubMed:20103719). Does not exhibit cutinase activity (PubMed:19225166).</text>
</comment>
<comment type="catalytic activity">
    <reaction evidence="6">
        <text>1,2-dihexadecanoyl-sn-glycero-3-phosphocholine + H2O = 1-hexadecanoyl-sn-glycero-3-phosphocholine + hexadecanoate + H(+)</text>
        <dbReference type="Rhea" id="RHEA:41223"/>
        <dbReference type="ChEBI" id="CHEBI:7896"/>
        <dbReference type="ChEBI" id="CHEBI:15377"/>
        <dbReference type="ChEBI" id="CHEBI:15378"/>
        <dbReference type="ChEBI" id="CHEBI:72998"/>
        <dbReference type="ChEBI" id="CHEBI:72999"/>
    </reaction>
    <physiologicalReaction direction="left-to-right" evidence="6">
        <dbReference type="Rhea" id="RHEA:41224"/>
    </physiologicalReaction>
</comment>
<comment type="catalytic activity">
    <reaction evidence="5 6">
        <text>a butanoate ester + H2O = an aliphatic alcohol + butanoate + H(+)</text>
        <dbReference type="Rhea" id="RHEA:47348"/>
        <dbReference type="ChEBI" id="CHEBI:2571"/>
        <dbReference type="ChEBI" id="CHEBI:15377"/>
        <dbReference type="ChEBI" id="CHEBI:15378"/>
        <dbReference type="ChEBI" id="CHEBI:17968"/>
        <dbReference type="ChEBI" id="CHEBI:50477"/>
    </reaction>
    <physiologicalReaction direction="left-to-right" evidence="5 6">
        <dbReference type="Rhea" id="RHEA:47349"/>
    </physiologicalReaction>
</comment>
<comment type="activity regulation">
    <text evidence="5 6">Inhibited by high concentrations of paraoxon (PubMed:19225166). Inhibited by tetrahydrolipstatin (THL), a specific lipase inhibitor (PubMed:20103719).</text>
</comment>
<comment type="subunit">
    <text evidence="6">Homodimer.</text>
</comment>
<comment type="subcellular location">
    <subcellularLocation>
        <location evidence="4">Cell membrane</location>
    </subcellularLocation>
    <subcellularLocation>
        <location evidence="4">Secreted</location>
        <location evidence="4">Cell wall</location>
    </subcellularLocation>
</comment>
<comment type="miscellaneous">
    <text evidence="7">Circulating B cells able to spontaneously generate specific antibodies directed against Culp4 are detected during active tuberculosis and in some latent-tuberculosis cases.</text>
</comment>
<comment type="similarity">
    <text evidence="9">Belongs to the cutinase family.</text>
</comment>
<reference key="1">
    <citation type="journal article" date="1998" name="Nature">
        <title>Deciphering the biology of Mycobacterium tuberculosis from the complete genome sequence.</title>
        <authorList>
            <person name="Cole S.T."/>
            <person name="Brosch R."/>
            <person name="Parkhill J."/>
            <person name="Garnier T."/>
            <person name="Churcher C.M."/>
            <person name="Harris D.E."/>
            <person name="Gordon S.V."/>
            <person name="Eiglmeier K."/>
            <person name="Gas S."/>
            <person name="Barry C.E. III"/>
            <person name="Tekaia F."/>
            <person name="Badcock K."/>
            <person name="Basham D."/>
            <person name="Brown D."/>
            <person name="Chillingworth T."/>
            <person name="Connor R."/>
            <person name="Davies R.M."/>
            <person name="Devlin K."/>
            <person name="Feltwell T."/>
            <person name="Gentles S."/>
            <person name="Hamlin N."/>
            <person name="Holroyd S."/>
            <person name="Hornsby T."/>
            <person name="Jagels K."/>
            <person name="Krogh A."/>
            <person name="McLean J."/>
            <person name="Moule S."/>
            <person name="Murphy L.D."/>
            <person name="Oliver S."/>
            <person name="Osborne J."/>
            <person name="Quail M.A."/>
            <person name="Rajandream M.A."/>
            <person name="Rogers J."/>
            <person name="Rutter S."/>
            <person name="Seeger K."/>
            <person name="Skelton S."/>
            <person name="Squares S."/>
            <person name="Squares R."/>
            <person name="Sulston J.E."/>
            <person name="Taylor K."/>
            <person name="Whitehead S."/>
            <person name="Barrell B.G."/>
        </authorList>
    </citation>
    <scope>NUCLEOTIDE SEQUENCE [LARGE SCALE GENOMIC DNA]</scope>
    <source>
        <strain>ATCC 25618 / H37Rv</strain>
    </source>
</reference>
<reference key="2">
    <citation type="journal article" date="2007" name="J. Bacteriol.">
        <title>Purification and characterization of mycobacterial phospholipase A: an activity associated with mycobacterial cutinase.</title>
        <authorList>
            <person name="Parker S.K."/>
            <person name="Curtin K.M."/>
            <person name="Vasil M.L."/>
        </authorList>
    </citation>
    <scope>SUBCELLULAR LOCATION</scope>
</reference>
<reference key="3">
    <citation type="journal article" date="2009" name="FASEB J.">
        <title>Cutinase-like proteins of Mycobacterium tuberculosis: characterization of their variable enzymatic functions and active site identification.</title>
        <authorList>
            <person name="West N.P."/>
            <person name="Chow F.M."/>
            <person name="Randall E.J."/>
            <person name="Wu J."/>
            <person name="Chen J."/>
            <person name="Ribeiro J.M."/>
            <person name="Britton W.J."/>
        </authorList>
    </citation>
    <scope>FUNCTION</scope>
    <scope>CATALYTIC ACTIVITY</scope>
    <scope>ACTIVITY REGULATION</scope>
    <source>
        <strain>H37Rv</strain>
    </source>
</reference>
<reference key="4">
    <citation type="journal article" date="2010" name="FASEB J.">
        <title>Two cutinase-like proteins secreted by Mycobacterium tuberculosis show very different lipolytic activities reflecting their physiological function.</title>
        <authorList>
            <person name="Schue M."/>
            <person name="Maurin D."/>
            <person name="Dhouib R."/>
            <person name="Bakala N'Goma J.C."/>
            <person name="Delorme V."/>
            <person name="Lambeau G."/>
            <person name="Carriere F."/>
            <person name="Canaan S."/>
        </authorList>
    </citation>
    <scope>FUNCTION</scope>
    <scope>CATALYTIC ACTIVITY</scope>
    <scope>ACTIVITY REGULATION</scope>
    <scope>SUBUNIT</scope>
</reference>
<reference key="5">
    <citation type="journal article" date="2018" name="PLoS ONE">
        <title>B cells response directed against Cut4 and CFP21 lipolytic enzymes in active and latent tuberculosis infections.</title>
        <authorList>
            <person name="Renier W."/>
            <person name="Bourdin A."/>
            <person name="Rubbo P.A."/>
            <person name="Peries M."/>
            <person name="Dedieu L."/>
            <person name="Bendriss S."/>
            <person name="Kremer L."/>
            <person name="Canaan S."/>
            <person name="Terru D."/>
            <person name="Godreuil S."/>
            <person name="Nagot N."/>
            <person name="Van de Perre P."/>
            <person name="Tuaillon E."/>
        </authorList>
    </citation>
    <scope>IMMUNOGENICITY</scope>
</reference>
<dbReference type="EC" id="3.1.1.-" evidence="5 6"/>
<dbReference type="EMBL" id="AL123456">
    <property type="protein sequence ID" value="CCP46274.1"/>
    <property type="molecule type" value="Genomic_DNA"/>
</dbReference>
<dbReference type="RefSeq" id="NP_217969.1">
    <property type="nucleotide sequence ID" value="NC_000962.3"/>
</dbReference>
<dbReference type="RefSeq" id="WP_003418339.1">
    <property type="nucleotide sequence ID" value="NZ_NVQJ01000065.1"/>
</dbReference>
<dbReference type="SMR" id="O06319"/>
<dbReference type="STRING" id="83332.Rv3452"/>
<dbReference type="SwissLipids" id="SLP:000001447"/>
<dbReference type="ESTHER" id="myctu-RV3452">
    <property type="family name" value="Cutinase"/>
</dbReference>
<dbReference type="PaxDb" id="83332-Rv3452"/>
<dbReference type="GeneID" id="45427442"/>
<dbReference type="GeneID" id="887610"/>
<dbReference type="KEGG" id="mtu:Rv3452"/>
<dbReference type="KEGG" id="mtv:RVBD_3452"/>
<dbReference type="PATRIC" id="fig|83332.111.peg.3847"/>
<dbReference type="TubercuList" id="Rv3452"/>
<dbReference type="eggNOG" id="ENOG5030PZC">
    <property type="taxonomic scope" value="Bacteria"/>
</dbReference>
<dbReference type="InParanoid" id="O06319"/>
<dbReference type="OrthoDB" id="3690529at2"/>
<dbReference type="PhylomeDB" id="O06319"/>
<dbReference type="Proteomes" id="UP000001584">
    <property type="component" value="Chromosome"/>
</dbReference>
<dbReference type="GO" id="GO:0005576">
    <property type="term" value="C:extracellular region"/>
    <property type="evidence" value="ECO:0007669"/>
    <property type="project" value="UniProtKB-KW"/>
</dbReference>
<dbReference type="GO" id="GO:0005886">
    <property type="term" value="C:plasma membrane"/>
    <property type="evidence" value="ECO:0007669"/>
    <property type="project" value="UniProtKB-SubCell"/>
</dbReference>
<dbReference type="GO" id="GO:0106435">
    <property type="term" value="F:carboxylesterase activity"/>
    <property type="evidence" value="ECO:0000318"/>
    <property type="project" value="GO_Central"/>
</dbReference>
<dbReference type="GO" id="GO:0016788">
    <property type="term" value="F:hydrolase activity, acting on ester bonds"/>
    <property type="evidence" value="ECO:0000314"/>
    <property type="project" value="MTBBASE"/>
</dbReference>
<dbReference type="GO" id="GO:0016298">
    <property type="term" value="F:lipase activity"/>
    <property type="evidence" value="ECO:0000318"/>
    <property type="project" value="GO_Central"/>
</dbReference>
<dbReference type="GO" id="GO:0004623">
    <property type="term" value="F:phospholipase A2 activity"/>
    <property type="evidence" value="ECO:0000314"/>
    <property type="project" value="MTBBASE"/>
</dbReference>
<dbReference type="GO" id="GO:0016042">
    <property type="term" value="P:lipid catabolic process"/>
    <property type="evidence" value="ECO:0000314"/>
    <property type="project" value="MTBBASE"/>
</dbReference>
<dbReference type="FunFam" id="3.40.50.1820:FF:000176">
    <property type="entry name" value="Cutinase Cut4"/>
    <property type="match status" value="1"/>
</dbReference>
<dbReference type="Gene3D" id="3.40.50.1820">
    <property type="entry name" value="alpha/beta hydrolase"/>
    <property type="match status" value="1"/>
</dbReference>
<dbReference type="InterPro" id="IPR029058">
    <property type="entry name" value="AB_hydrolase_fold"/>
</dbReference>
<dbReference type="InterPro" id="IPR000675">
    <property type="entry name" value="Cutinase/axe"/>
</dbReference>
<dbReference type="PANTHER" id="PTHR33630:SF9">
    <property type="entry name" value="CUTINASE 4"/>
    <property type="match status" value="1"/>
</dbReference>
<dbReference type="PANTHER" id="PTHR33630">
    <property type="entry name" value="CUTINASE RV1984C-RELATED-RELATED"/>
    <property type="match status" value="1"/>
</dbReference>
<dbReference type="Pfam" id="PF01083">
    <property type="entry name" value="Cutinase"/>
    <property type="match status" value="1"/>
</dbReference>
<dbReference type="SMART" id="SM01110">
    <property type="entry name" value="Cutinase"/>
    <property type="match status" value="1"/>
</dbReference>
<dbReference type="SUPFAM" id="SSF53474">
    <property type="entry name" value="alpha/beta-Hydrolases"/>
    <property type="match status" value="1"/>
</dbReference>
<evidence type="ECO:0000250" key="1">
    <source>
        <dbReference type="UniProtKB" id="O53581"/>
    </source>
</evidence>
<evidence type="ECO:0000250" key="2">
    <source>
        <dbReference type="UniProtKB" id="P00590"/>
    </source>
</evidence>
<evidence type="ECO:0000255" key="3"/>
<evidence type="ECO:0000269" key="4">
    <source>
    </source>
</evidence>
<evidence type="ECO:0000269" key="5">
    <source>
    </source>
</evidence>
<evidence type="ECO:0000269" key="6">
    <source>
    </source>
</evidence>
<evidence type="ECO:0000269" key="7">
    <source>
    </source>
</evidence>
<evidence type="ECO:0000303" key="8">
    <source>
    </source>
</evidence>
<evidence type="ECO:0000305" key="9"/>
<evidence type="ECO:0000312" key="10">
    <source>
        <dbReference type="EMBL" id="CCP46274.1"/>
    </source>
</evidence>
<feature type="signal peptide" evidence="3">
    <location>
        <begin position="1"/>
        <end position="45"/>
    </location>
</feature>
<feature type="chain" id="PRO_5010306774" description="Phospholipase Culp4" evidence="3">
    <location>
        <begin position="46"/>
        <end position="226"/>
    </location>
</feature>
<feature type="active site" description="Nucleophile" evidence="1">
    <location>
        <position position="128"/>
    </location>
</feature>
<feature type="active site" evidence="1">
    <location>
        <position position="195"/>
    </location>
</feature>
<feature type="active site" description="Proton donor/acceptor" evidence="1">
    <location>
        <position position="207"/>
    </location>
</feature>
<feature type="site" description="Transition state stabilizer" evidence="2">
    <location>
        <position position="129"/>
    </location>
</feature>
<feature type="disulfide bond" evidence="1">
    <location>
        <begin position="47"/>
        <end position="117"/>
    </location>
</feature>
<feature type="disulfide bond" evidence="1">
    <location>
        <begin position="191"/>
        <end position="198"/>
    </location>
</feature>
<accession>O06319</accession>
<accession>F2GIK6</accession>
<accession>I6YG67</accession>
<gene>
    <name evidence="10" type="primary">cut4</name>
    <name evidence="10" type="ordered locus">Rv3452</name>
</gene>
<keyword id="KW-1003">Cell membrane</keyword>
<keyword id="KW-0134">Cell wall</keyword>
<keyword id="KW-1015">Disulfide bond</keyword>
<keyword id="KW-0378">Hydrolase</keyword>
<keyword id="KW-0472">Membrane</keyword>
<keyword id="KW-1185">Reference proteome</keyword>
<keyword id="KW-0964">Secreted</keyword>
<keyword id="KW-0719">Serine esterase</keyword>
<keyword id="KW-0732">Signal</keyword>
<organism>
    <name type="scientific">Mycobacterium tuberculosis (strain ATCC 25618 / H37Rv)</name>
    <dbReference type="NCBI Taxonomy" id="83332"/>
    <lineage>
        <taxon>Bacteria</taxon>
        <taxon>Bacillati</taxon>
        <taxon>Actinomycetota</taxon>
        <taxon>Actinomycetes</taxon>
        <taxon>Mycobacteriales</taxon>
        <taxon>Mycobacteriaceae</taxon>
        <taxon>Mycobacterium</taxon>
        <taxon>Mycobacterium tuberculosis complex</taxon>
    </lineage>
</organism>